<reference key="1">
    <citation type="submission" date="2009-05" db="EMBL/GenBank/DDBJ databases">
        <title>Complete sequence of Tolumonas auensis DSM 9187.</title>
        <authorList>
            <consortium name="US DOE Joint Genome Institute"/>
            <person name="Lucas S."/>
            <person name="Copeland A."/>
            <person name="Lapidus A."/>
            <person name="Glavina del Rio T."/>
            <person name="Tice H."/>
            <person name="Bruce D."/>
            <person name="Goodwin L."/>
            <person name="Pitluck S."/>
            <person name="Chertkov O."/>
            <person name="Brettin T."/>
            <person name="Detter J.C."/>
            <person name="Han C."/>
            <person name="Larimer F."/>
            <person name="Land M."/>
            <person name="Hauser L."/>
            <person name="Kyrpides N."/>
            <person name="Mikhailova N."/>
            <person name="Spring S."/>
            <person name="Beller H."/>
        </authorList>
    </citation>
    <scope>NUCLEOTIDE SEQUENCE [LARGE SCALE GENOMIC DNA]</scope>
    <source>
        <strain>DSM 9187 / NBRC 110442 / TA 4</strain>
    </source>
</reference>
<organism>
    <name type="scientific">Tolumonas auensis (strain DSM 9187 / NBRC 110442 / TA 4)</name>
    <dbReference type="NCBI Taxonomy" id="595494"/>
    <lineage>
        <taxon>Bacteria</taxon>
        <taxon>Pseudomonadati</taxon>
        <taxon>Pseudomonadota</taxon>
        <taxon>Gammaproteobacteria</taxon>
        <taxon>Aeromonadales</taxon>
        <taxon>Aeromonadaceae</taxon>
        <taxon>Tolumonas</taxon>
    </lineage>
</organism>
<keyword id="KW-1185">Reference proteome</keyword>
<keyword id="KW-0687">Ribonucleoprotein</keyword>
<keyword id="KW-0689">Ribosomal protein</keyword>
<gene>
    <name evidence="1" type="primary">rpmF</name>
    <name type="ordered locus">Tola_2196</name>
</gene>
<accession>C4L8E9</accession>
<proteinExistence type="inferred from homology"/>
<evidence type="ECO:0000255" key="1">
    <source>
        <dbReference type="HAMAP-Rule" id="MF_00340"/>
    </source>
</evidence>
<evidence type="ECO:0000256" key="2">
    <source>
        <dbReference type="SAM" id="MobiDB-lite"/>
    </source>
</evidence>
<evidence type="ECO:0000305" key="3"/>
<sequence>MAVQQNRKTRSRRGMRRSHDALTAAQLSVDSTSGETHRRHHVTADGYYRGKKVI</sequence>
<feature type="chain" id="PRO_1000205274" description="Large ribosomal subunit protein bL32">
    <location>
        <begin position="1"/>
        <end position="54"/>
    </location>
</feature>
<feature type="region of interest" description="Disordered" evidence="2">
    <location>
        <begin position="1"/>
        <end position="54"/>
    </location>
</feature>
<feature type="compositionally biased region" description="Basic residues" evidence="2">
    <location>
        <begin position="7"/>
        <end position="16"/>
    </location>
</feature>
<feature type="compositionally biased region" description="Polar residues" evidence="2">
    <location>
        <begin position="25"/>
        <end position="34"/>
    </location>
</feature>
<comment type="similarity">
    <text evidence="1">Belongs to the bacterial ribosomal protein bL32 family.</text>
</comment>
<name>RL32_TOLAT</name>
<protein>
    <recommendedName>
        <fullName evidence="1">Large ribosomal subunit protein bL32</fullName>
    </recommendedName>
    <alternativeName>
        <fullName evidence="3">50S ribosomal protein L32</fullName>
    </alternativeName>
</protein>
<dbReference type="EMBL" id="CP001616">
    <property type="protein sequence ID" value="ACQ93795.1"/>
    <property type="molecule type" value="Genomic_DNA"/>
</dbReference>
<dbReference type="RefSeq" id="WP_015879263.1">
    <property type="nucleotide sequence ID" value="NC_012691.1"/>
</dbReference>
<dbReference type="SMR" id="C4L8E9"/>
<dbReference type="STRING" id="595494.Tola_2196"/>
<dbReference type="KEGG" id="tau:Tola_2196"/>
<dbReference type="eggNOG" id="COG0333">
    <property type="taxonomic scope" value="Bacteria"/>
</dbReference>
<dbReference type="HOGENOM" id="CLU_129084_2_1_6"/>
<dbReference type="OrthoDB" id="9801927at2"/>
<dbReference type="Proteomes" id="UP000009073">
    <property type="component" value="Chromosome"/>
</dbReference>
<dbReference type="GO" id="GO:0015934">
    <property type="term" value="C:large ribosomal subunit"/>
    <property type="evidence" value="ECO:0007669"/>
    <property type="project" value="InterPro"/>
</dbReference>
<dbReference type="GO" id="GO:0003735">
    <property type="term" value="F:structural constituent of ribosome"/>
    <property type="evidence" value="ECO:0007669"/>
    <property type="project" value="InterPro"/>
</dbReference>
<dbReference type="GO" id="GO:0006412">
    <property type="term" value="P:translation"/>
    <property type="evidence" value="ECO:0007669"/>
    <property type="project" value="UniProtKB-UniRule"/>
</dbReference>
<dbReference type="HAMAP" id="MF_00340">
    <property type="entry name" value="Ribosomal_bL32"/>
    <property type="match status" value="1"/>
</dbReference>
<dbReference type="InterPro" id="IPR002677">
    <property type="entry name" value="Ribosomal_bL32"/>
</dbReference>
<dbReference type="InterPro" id="IPR044957">
    <property type="entry name" value="Ribosomal_bL32_bact"/>
</dbReference>
<dbReference type="InterPro" id="IPR011332">
    <property type="entry name" value="Ribosomal_zn-bd"/>
</dbReference>
<dbReference type="NCBIfam" id="TIGR01031">
    <property type="entry name" value="rpmF_bact"/>
    <property type="match status" value="1"/>
</dbReference>
<dbReference type="PANTHER" id="PTHR35534">
    <property type="entry name" value="50S RIBOSOMAL PROTEIN L32"/>
    <property type="match status" value="1"/>
</dbReference>
<dbReference type="PANTHER" id="PTHR35534:SF1">
    <property type="entry name" value="LARGE RIBOSOMAL SUBUNIT PROTEIN BL32"/>
    <property type="match status" value="1"/>
</dbReference>
<dbReference type="Pfam" id="PF01783">
    <property type="entry name" value="Ribosomal_L32p"/>
    <property type="match status" value="1"/>
</dbReference>
<dbReference type="SUPFAM" id="SSF57829">
    <property type="entry name" value="Zn-binding ribosomal proteins"/>
    <property type="match status" value="1"/>
</dbReference>